<evidence type="ECO:0000255" key="1">
    <source>
        <dbReference type="HAMAP-Rule" id="MF_00093"/>
    </source>
</evidence>
<evidence type="ECO:0000256" key="2">
    <source>
        <dbReference type="SAM" id="MobiDB-lite"/>
    </source>
</evidence>
<gene>
    <name evidence="1" type="primary">prfA</name>
    <name type="ordered locus">Bphyt_3522</name>
</gene>
<dbReference type="EMBL" id="CP001052">
    <property type="protein sequence ID" value="ACD17912.1"/>
    <property type="molecule type" value="Genomic_DNA"/>
</dbReference>
<dbReference type="RefSeq" id="WP_012434473.1">
    <property type="nucleotide sequence ID" value="NC_010681.1"/>
</dbReference>
<dbReference type="SMR" id="B2SZ27"/>
<dbReference type="STRING" id="398527.Bphyt_3522"/>
<dbReference type="KEGG" id="bpy:Bphyt_3522"/>
<dbReference type="eggNOG" id="COG0216">
    <property type="taxonomic scope" value="Bacteria"/>
</dbReference>
<dbReference type="HOGENOM" id="CLU_036856_0_1_4"/>
<dbReference type="OrthoDB" id="9806673at2"/>
<dbReference type="Proteomes" id="UP000001739">
    <property type="component" value="Chromosome 1"/>
</dbReference>
<dbReference type="GO" id="GO:0005737">
    <property type="term" value="C:cytoplasm"/>
    <property type="evidence" value="ECO:0007669"/>
    <property type="project" value="UniProtKB-SubCell"/>
</dbReference>
<dbReference type="GO" id="GO:0016149">
    <property type="term" value="F:translation release factor activity, codon specific"/>
    <property type="evidence" value="ECO:0007669"/>
    <property type="project" value="UniProtKB-UniRule"/>
</dbReference>
<dbReference type="FunFam" id="3.30.160.20:FF:000004">
    <property type="entry name" value="Peptide chain release factor 1"/>
    <property type="match status" value="1"/>
</dbReference>
<dbReference type="FunFam" id="3.30.70.1660:FF:000002">
    <property type="entry name" value="Peptide chain release factor 1"/>
    <property type="match status" value="1"/>
</dbReference>
<dbReference type="FunFam" id="3.30.70.1660:FF:000004">
    <property type="entry name" value="Peptide chain release factor 1"/>
    <property type="match status" value="1"/>
</dbReference>
<dbReference type="Gene3D" id="3.30.160.20">
    <property type="match status" value="1"/>
</dbReference>
<dbReference type="Gene3D" id="3.30.70.1660">
    <property type="match status" value="2"/>
</dbReference>
<dbReference type="Gene3D" id="6.10.140.1950">
    <property type="match status" value="1"/>
</dbReference>
<dbReference type="HAMAP" id="MF_00093">
    <property type="entry name" value="Rel_fac_1"/>
    <property type="match status" value="1"/>
</dbReference>
<dbReference type="InterPro" id="IPR005139">
    <property type="entry name" value="PCRF"/>
</dbReference>
<dbReference type="InterPro" id="IPR000352">
    <property type="entry name" value="Pep_chain_release_fac_I"/>
</dbReference>
<dbReference type="InterPro" id="IPR045853">
    <property type="entry name" value="Pep_chain_release_fac_I_sf"/>
</dbReference>
<dbReference type="InterPro" id="IPR050057">
    <property type="entry name" value="Prokaryotic/Mito_RF"/>
</dbReference>
<dbReference type="InterPro" id="IPR004373">
    <property type="entry name" value="RF-1"/>
</dbReference>
<dbReference type="NCBIfam" id="TIGR00019">
    <property type="entry name" value="prfA"/>
    <property type="match status" value="1"/>
</dbReference>
<dbReference type="NCBIfam" id="NF001859">
    <property type="entry name" value="PRK00591.1"/>
    <property type="match status" value="1"/>
</dbReference>
<dbReference type="PANTHER" id="PTHR43804">
    <property type="entry name" value="LD18447P"/>
    <property type="match status" value="1"/>
</dbReference>
<dbReference type="PANTHER" id="PTHR43804:SF7">
    <property type="entry name" value="LD18447P"/>
    <property type="match status" value="1"/>
</dbReference>
<dbReference type="Pfam" id="PF03462">
    <property type="entry name" value="PCRF"/>
    <property type="match status" value="1"/>
</dbReference>
<dbReference type="Pfam" id="PF00472">
    <property type="entry name" value="RF-1"/>
    <property type="match status" value="1"/>
</dbReference>
<dbReference type="SMART" id="SM00937">
    <property type="entry name" value="PCRF"/>
    <property type="match status" value="1"/>
</dbReference>
<dbReference type="SUPFAM" id="SSF75620">
    <property type="entry name" value="Release factor"/>
    <property type="match status" value="1"/>
</dbReference>
<dbReference type="PROSITE" id="PS00745">
    <property type="entry name" value="RF_PROK_I"/>
    <property type="match status" value="1"/>
</dbReference>
<organism>
    <name type="scientific">Paraburkholderia phytofirmans (strain DSM 17436 / LMG 22146 / PsJN)</name>
    <name type="common">Burkholderia phytofirmans</name>
    <dbReference type="NCBI Taxonomy" id="398527"/>
    <lineage>
        <taxon>Bacteria</taxon>
        <taxon>Pseudomonadati</taxon>
        <taxon>Pseudomonadota</taxon>
        <taxon>Betaproteobacteria</taxon>
        <taxon>Burkholderiales</taxon>
        <taxon>Burkholderiaceae</taxon>
        <taxon>Paraburkholderia</taxon>
    </lineage>
</organism>
<reference key="1">
    <citation type="journal article" date="2011" name="J. Bacteriol.">
        <title>Complete genome sequence of the plant growth-promoting endophyte Burkholderia phytofirmans strain PsJN.</title>
        <authorList>
            <person name="Weilharter A."/>
            <person name="Mitter B."/>
            <person name="Shin M.V."/>
            <person name="Chain P.S."/>
            <person name="Nowak J."/>
            <person name="Sessitsch A."/>
        </authorList>
    </citation>
    <scope>NUCLEOTIDE SEQUENCE [LARGE SCALE GENOMIC DNA]</scope>
    <source>
        <strain>DSM 17436 / LMG 22146 / PsJN</strain>
    </source>
</reference>
<name>RF1_PARPJ</name>
<comment type="function">
    <text evidence="1">Peptide chain release factor 1 directs the termination of translation in response to the peptide chain termination codons UAG and UAA.</text>
</comment>
<comment type="subcellular location">
    <subcellularLocation>
        <location evidence="1">Cytoplasm</location>
    </subcellularLocation>
</comment>
<comment type="PTM">
    <text evidence="1">Methylated by PrmC. Methylation increases the termination efficiency of RF1.</text>
</comment>
<comment type="similarity">
    <text evidence="1">Belongs to the prokaryotic/mitochondrial release factor family.</text>
</comment>
<proteinExistence type="inferred from homology"/>
<accession>B2SZ27</accession>
<protein>
    <recommendedName>
        <fullName evidence="1">Peptide chain release factor 1</fullName>
        <shortName evidence="1">RF-1</shortName>
    </recommendedName>
</protein>
<feature type="chain" id="PRO_1000093434" description="Peptide chain release factor 1">
    <location>
        <begin position="1"/>
        <end position="360"/>
    </location>
</feature>
<feature type="region of interest" description="Disordered" evidence="2">
    <location>
        <begin position="280"/>
        <end position="300"/>
    </location>
</feature>
<feature type="compositionally biased region" description="Basic and acidic residues" evidence="2">
    <location>
        <begin position="280"/>
        <end position="293"/>
    </location>
</feature>
<feature type="modified residue" description="N5-methylglutamine" evidence="1">
    <location>
        <position position="235"/>
    </location>
</feature>
<keyword id="KW-0963">Cytoplasm</keyword>
<keyword id="KW-0488">Methylation</keyword>
<keyword id="KW-0648">Protein biosynthesis</keyword>
<sequence length="360" mass="40353">MKTSMQRKLDQLTTRLAELNDLLSREDITSNLDQYRKLTREHAELGPVVDHYALWRQAMNDATTAQELLADASMRDFAEDEIRAARERMEKLGAELQKMLLPKDPNDDRNIFLEIRAGTGGDESALFAGDLLRMYLRFAERNRWQVEMMSASESDLGGYKEVIVRIAGEAAYSKLKFESGGHRVQRVPATETQGRIHTSACTVAVMPEADEIGEVEINPADLRIDTFRASGAGGQHINKTDSAVRVTHLPTGIVVECQDDRSQHKNKDRALKVLAARIKDKQSHEQQAKEAATRKSLIGSGDRSERIRTYNFPQGRLTDHRINLTLYRLDAIMDGDLDELIAALVSEHQAELLASLGDAD</sequence>